<reference key="1">
    <citation type="journal article" date="2006" name="Nat. Biotechnol.">
        <title>Genome sequence of the ubiquitous hydrocarbon-degrading marine bacterium Alcanivorax borkumensis.</title>
        <authorList>
            <person name="Schneiker S."/>
            <person name="Martins dos Santos V.A.P."/>
            <person name="Bartels D."/>
            <person name="Bekel T."/>
            <person name="Brecht M."/>
            <person name="Buhrmester J."/>
            <person name="Chernikova T.N."/>
            <person name="Denaro R."/>
            <person name="Ferrer M."/>
            <person name="Gertler C."/>
            <person name="Goesmann A."/>
            <person name="Golyshina O.V."/>
            <person name="Kaminski F."/>
            <person name="Khachane A.N."/>
            <person name="Lang S."/>
            <person name="Linke B."/>
            <person name="McHardy A.C."/>
            <person name="Meyer F."/>
            <person name="Nechitaylo T."/>
            <person name="Puehler A."/>
            <person name="Regenhardt D."/>
            <person name="Rupp O."/>
            <person name="Sabirova J.S."/>
            <person name="Selbitschka W."/>
            <person name="Yakimov M.M."/>
            <person name="Timmis K.N."/>
            <person name="Vorhoelter F.-J."/>
            <person name="Weidner S."/>
            <person name="Kaiser O."/>
            <person name="Golyshin P.N."/>
        </authorList>
    </citation>
    <scope>NUCLEOTIDE SEQUENCE [LARGE SCALE GENOMIC DNA]</scope>
    <source>
        <strain>ATCC 700651 / DSM 11573 / NCIMB 13689 / SK2</strain>
    </source>
</reference>
<evidence type="ECO:0000255" key="1">
    <source>
        <dbReference type="HAMAP-Rule" id="MF_00227"/>
    </source>
</evidence>
<sequence length="121" mass="14108">MPISQAFTRQHRLLTGPQYQTVFDQPEWKVGLGGYLLLVTRNSQPHPRLGLVIGRKRVKRAVDRARIKRRVREQFRCRQQELAGLDIILLVRGRIENPNPNQVTLDITRLFDKLLAKCRQA</sequence>
<accession>Q0VKU6</accession>
<gene>
    <name evidence="1" type="primary">rnpA</name>
    <name type="ordered locus">ABO_2754</name>
</gene>
<organism>
    <name type="scientific">Alcanivorax borkumensis (strain ATCC 700651 / DSM 11573 / NCIMB 13689 / SK2)</name>
    <dbReference type="NCBI Taxonomy" id="393595"/>
    <lineage>
        <taxon>Bacteria</taxon>
        <taxon>Pseudomonadati</taxon>
        <taxon>Pseudomonadota</taxon>
        <taxon>Gammaproteobacteria</taxon>
        <taxon>Oceanospirillales</taxon>
        <taxon>Alcanivoracaceae</taxon>
        <taxon>Alcanivorax</taxon>
    </lineage>
</organism>
<name>RNPA_ALCBS</name>
<dbReference type="EC" id="3.1.26.5" evidence="1"/>
<dbReference type="EMBL" id="AM286690">
    <property type="protein sequence ID" value="CAL18202.1"/>
    <property type="molecule type" value="Genomic_DNA"/>
</dbReference>
<dbReference type="SMR" id="Q0VKU6"/>
<dbReference type="STRING" id="393595.ABO_2754"/>
<dbReference type="KEGG" id="abo:ABO_2754"/>
<dbReference type="eggNOG" id="COG0594">
    <property type="taxonomic scope" value="Bacteria"/>
</dbReference>
<dbReference type="HOGENOM" id="CLU_117179_11_0_6"/>
<dbReference type="OrthoDB" id="9796422at2"/>
<dbReference type="Proteomes" id="UP000008871">
    <property type="component" value="Chromosome"/>
</dbReference>
<dbReference type="GO" id="GO:0030677">
    <property type="term" value="C:ribonuclease P complex"/>
    <property type="evidence" value="ECO:0007669"/>
    <property type="project" value="TreeGrafter"/>
</dbReference>
<dbReference type="GO" id="GO:0042781">
    <property type="term" value="F:3'-tRNA processing endoribonuclease activity"/>
    <property type="evidence" value="ECO:0007669"/>
    <property type="project" value="TreeGrafter"/>
</dbReference>
<dbReference type="GO" id="GO:0004526">
    <property type="term" value="F:ribonuclease P activity"/>
    <property type="evidence" value="ECO:0007669"/>
    <property type="project" value="UniProtKB-UniRule"/>
</dbReference>
<dbReference type="GO" id="GO:0000049">
    <property type="term" value="F:tRNA binding"/>
    <property type="evidence" value="ECO:0007669"/>
    <property type="project" value="UniProtKB-UniRule"/>
</dbReference>
<dbReference type="GO" id="GO:0001682">
    <property type="term" value="P:tRNA 5'-leader removal"/>
    <property type="evidence" value="ECO:0007669"/>
    <property type="project" value="UniProtKB-UniRule"/>
</dbReference>
<dbReference type="Gene3D" id="3.30.230.10">
    <property type="match status" value="1"/>
</dbReference>
<dbReference type="HAMAP" id="MF_00227">
    <property type="entry name" value="RNase_P"/>
    <property type="match status" value="1"/>
</dbReference>
<dbReference type="InterPro" id="IPR020568">
    <property type="entry name" value="Ribosomal_Su5_D2-typ_SF"/>
</dbReference>
<dbReference type="InterPro" id="IPR014721">
    <property type="entry name" value="Ribsml_uS5_D2-typ_fold_subgr"/>
</dbReference>
<dbReference type="InterPro" id="IPR000100">
    <property type="entry name" value="RNase_P"/>
</dbReference>
<dbReference type="NCBIfam" id="TIGR00188">
    <property type="entry name" value="rnpA"/>
    <property type="match status" value="1"/>
</dbReference>
<dbReference type="PANTHER" id="PTHR33992">
    <property type="entry name" value="RIBONUCLEASE P PROTEIN COMPONENT"/>
    <property type="match status" value="1"/>
</dbReference>
<dbReference type="PANTHER" id="PTHR33992:SF1">
    <property type="entry name" value="RIBONUCLEASE P PROTEIN COMPONENT"/>
    <property type="match status" value="1"/>
</dbReference>
<dbReference type="Pfam" id="PF00825">
    <property type="entry name" value="Ribonuclease_P"/>
    <property type="match status" value="1"/>
</dbReference>
<dbReference type="SUPFAM" id="SSF54211">
    <property type="entry name" value="Ribosomal protein S5 domain 2-like"/>
    <property type="match status" value="1"/>
</dbReference>
<keyword id="KW-0255">Endonuclease</keyword>
<keyword id="KW-0378">Hydrolase</keyword>
<keyword id="KW-0540">Nuclease</keyword>
<keyword id="KW-1185">Reference proteome</keyword>
<keyword id="KW-0694">RNA-binding</keyword>
<keyword id="KW-0819">tRNA processing</keyword>
<feature type="chain" id="PRO_1000078187" description="Ribonuclease P protein component">
    <location>
        <begin position="1"/>
        <end position="121"/>
    </location>
</feature>
<comment type="function">
    <text evidence="1">RNaseP catalyzes the removal of the 5'-leader sequence from pre-tRNA to produce the mature 5'-terminus. It can also cleave other RNA substrates such as 4.5S RNA. The protein component plays an auxiliary but essential role in vivo by binding to the 5'-leader sequence and broadening the substrate specificity of the ribozyme.</text>
</comment>
<comment type="catalytic activity">
    <reaction evidence="1">
        <text>Endonucleolytic cleavage of RNA, removing 5'-extranucleotides from tRNA precursor.</text>
        <dbReference type="EC" id="3.1.26.5"/>
    </reaction>
</comment>
<comment type="subunit">
    <text evidence="1">Consists of a catalytic RNA component (M1 or rnpB) and a protein subunit.</text>
</comment>
<comment type="similarity">
    <text evidence="1">Belongs to the RnpA family.</text>
</comment>
<proteinExistence type="inferred from homology"/>
<protein>
    <recommendedName>
        <fullName evidence="1">Ribonuclease P protein component</fullName>
        <shortName evidence="1">RNase P protein</shortName>
        <shortName evidence="1">RNaseP protein</shortName>
        <ecNumber evidence="1">3.1.26.5</ecNumber>
    </recommendedName>
    <alternativeName>
        <fullName evidence="1">Protein C5</fullName>
    </alternativeName>
</protein>